<proteinExistence type="inferred from homology"/>
<reference key="1">
    <citation type="submission" date="2007-03" db="EMBL/GenBank/DDBJ databases">
        <authorList>
            <person name="Heidelberg J."/>
        </authorList>
    </citation>
    <scope>NUCLEOTIDE SEQUENCE [LARGE SCALE GENOMIC DNA]</scope>
    <source>
        <strain>ATCC 39541 / Classical Ogawa 395 / O395</strain>
    </source>
</reference>
<reference key="2">
    <citation type="journal article" date="2008" name="PLoS ONE">
        <title>A recalibrated molecular clock and independent origins for the cholera pandemic clones.</title>
        <authorList>
            <person name="Feng L."/>
            <person name="Reeves P.R."/>
            <person name="Lan R."/>
            <person name="Ren Y."/>
            <person name="Gao C."/>
            <person name="Zhou Z."/>
            <person name="Ren Y."/>
            <person name="Cheng J."/>
            <person name="Wang W."/>
            <person name="Wang J."/>
            <person name="Qian W."/>
            <person name="Li D."/>
            <person name="Wang L."/>
        </authorList>
    </citation>
    <scope>NUCLEOTIDE SEQUENCE [LARGE SCALE GENOMIC DNA]</scope>
    <source>
        <strain>ATCC 39541 / Classical Ogawa 395 / O395</strain>
    </source>
</reference>
<dbReference type="EMBL" id="CP000627">
    <property type="protein sequence ID" value="ABQ20986.1"/>
    <property type="molecule type" value="Genomic_DNA"/>
</dbReference>
<dbReference type="EMBL" id="CP001235">
    <property type="protein sequence ID" value="ACP08521.1"/>
    <property type="molecule type" value="Genomic_DNA"/>
</dbReference>
<dbReference type="SMR" id="A5F9H9"/>
<dbReference type="KEGG" id="vco:VC0395_A0010"/>
<dbReference type="KEGG" id="vcr:VC395_0502"/>
<dbReference type="PATRIC" id="fig|345073.21.peg.489"/>
<dbReference type="eggNOG" id="COG1872">
    <property type="taxonomic scope" value="Bacteria"/>
</dbReference>
<dbReference type="HOGENOM" id="CLU_130694_5_0_6"/>
<dbReference type="OrthoDB" id="9800587at2"/>
<dbReference type="Proteomes" id="UP000000249">
    <property type="component" value="Chromosome 2"/>
</dbReference>
<dbReference type="GO" id="GO:0005737">
    <property type="term" value="C:cytoplasm"/>
    <property type="evidence" value="ECO:0007669"/>
    <property type="project" value="TreeGrafter"/>
</dbReference>
<dbReference type="Gene3D" id="3.30.1200.10">
    <property type="entry name" value="YggU-like"/>
    <property type="match status" value="1"/>
</dbReference>
<dbReference type="HAMAP" id="MF_00634">
    <property type="entry name" value="UPF0235"/>
    <property type="match status" value="1"/>
</dbReference>
<dbReference type="InterPro" id="IPR003746">
    <property type="entry name" value="DUF167"/>
</dbReference>
<dbReference type="InterPro" id="IPR036591">
    <property type="entry name" value="YggU-like_sf"/>
</dbReference>
<dbReference type="NCBIfam" id="TIGR00251">
    <property type="entry name" value="DUF167 family protein"/>
    <property type="match status" value="1"/>
</dbReference>
<dbReference type="NCBIfam" id="NF003466">
    <property type="entry name" value="PRK05090.1"/>
    <property type="match status" value="1"/>
</dbReference>
<dbReference type="PANTHER" id="PTHR13420">
    <property type="entry name" value="UPF0235 PROTEIN C15ORF40"/>
    <property type="match status" value="1"/>
</dbReference>
<dbReference type="PANTHER" id="PTHR13420:SF7">
    <property type="entry name" value="UPF0235 PROTEIN C15ORF40"/>
    <property type="match status" value="1"/>
</dbReference>
<dbReference type="Pfam" id="PF02594">
    <property type="entry name" value="DUF167"/>
    <property type="match status" value="1"/>
</dbReference>
<dbReference type="SMART" id="SM01152">
    <property type="entry name" value="DUF167"/>
    <property type="match status" value="1"/>
</dbReference>
<dbReference type="SUPFAM" id="SSF69786">
    <property type="entry name" value="YggU-like"/>
    <property type="match status" value="1"/>
</dbReference>
<name>Y1210_VIBC3</name>
<feature type="chain" id="PRO_1000072673" description="UPF0235 protein VC0395_A0010/VC395_0502">
    <location>
        <begin position="1"/>
        <end position="96"/>
    </location>
</feature>
<comment type="similarity">
    <text evidence="1">Belongs to the UPF0235 family.</text>
</comment>
<accession>A5F9H9</accession>
<accession>C3M4P9</accession>
<organism>
    <name type="scientific">Vibrio cholerae serotype O1 (strain ATCC 39541 / Classical Ogawa 395 / O395)</name>
    <dbReference type="NCBI Taxonomy" id="345073"/>
    <lineage>
        <taxon>Bacteria</taxon>
        <taxon>Pseudomonadati</taxon>
        <taxon>Pseudomonadota</taxon>
        <taxon>Gammaproteobacteria</taxon>
        <taxon>Vibrionales</taxon>
        <taxon>Vibrionaceae</taxon>
        <taxon>Vibrio</taxon>
    </lineage>
</organism>
<sequence>MAAVWREGDDLLLRLYIQPKASRDSIVGLHGEELKVAITAPPIDGKANAHLSKYLAKLCKVAKGSVVIEKGELGRHKQVRILQPSQIPAEITALIE</sequence>
<protein>
    <recommendedName>
        <fullName evidence="1">UPF0235 protein VC0395_A0010/VC395_0502</fullName>
    </recommendedName>
</protein>
<gene>
    <name type="ordered locus">VC0395_A0010</name>
    <name type="ordered locus">VC395_0502</name>
</gene>
<evidence type="ECO:0000255" key="1">
    <source>
        <dbReference type="HAMAP-Rule" id="MF_00634"/>
    </source>
</evidence>